<name>TXB1A_SCODE</name>
<dbReference type="EMBL" id="KC144104">
    <property type="status" value="NOT_ANNOTATED_CDS"/>
    <property type="molecule type" value="mRNA"/>
</dbReference>
<dbReference type="GO" id="GO:0005576">
    <property type="term" value="C:extracellular region"/>
    <property type="evidence" value="ECO:0007669"/>
    <property type="project" value="UniProtKB-SubCell"/>
</dbReference>
<dbReference type="GO" id="GO:0015459">
    <property type="term" value="F:potassium channel regulator activity"/>
    <property type="evidence" value="ECO:0007669"/>
    <property type="project" value="UniProtKB-KW"/>
</dbReference>
<dbReference type="GO" id="GO:0090729">
    <property type="term" value="F:toxin activity"/>
    <property type="evidence" value="ECO:0007669"/>
    <property type="project" value="UniProtKB-KW"/>
</dbReference>
<dbReference type="Gene3D" id="2.20.20.160">
    <property type="match status" value="2"/>
</dbReference>
<comment type="function">
    <text evidence="5">Voltage-gated potassium channel inhibitor.</text>
</comment>
<comment type="subcellular location">
    <subcellularLocation>
        <location evidence="2">Secreted</location>
    </subcellularLocation>
</comment>
<comment type="tissue specificity">
    <text evidence="5">Expressed by the venom gland.</text>
</comment>
<comment type="PTM">
    <text evidence="4">Contains 8 disulfide bonds.</text>
</comment>
<comment type="mass spectrometry" mass="22462.1" method="MALDI" evidence="2"/>
<comment type="similarity">
    <text evidence="4">Belongs to the scoloptoxin-11 family.</text>
</comment>
<reference key="1">
    <citation type="journal article" date="2012" name="J. Proteome Res.">
        <title>Venomic and transcriptomic analysis of centipede Scolopendra subspinipes dehaani.</title>
        <authorList>
            <person name="Liu Z.C."/>
            <person name="Zhang R."/>
            <person name="Zhao F."/>
            <person name="Chen Z.M."/>
            <person name="Liu H.W."/>
            <person name="Wang Y.J."/>
            <person name="Jiang P."/>
            <person name="Zhang Y."/>
            <person name="Wu Y."/>
            <person name="Ding J.P."/>
            <person name="Lee W.H."/>
            <person name="Zhang Y."/>
        </authorList>
    </citation>
    <scope>NUCLEOTIDE SEQUENCE [MRNA]</scope>
    <scope>PROTEIN SEQUENCE OF 26-47</scope>
    <scope>SUBCELLULAR LOCATION</scope>
    <scope>MASS SPECTROMETRY</scope>
    <scope>FUNCTION</scope>
    <source>
        <tissue>Venom</tissue>
        <tissue>Venom gland</tissue>
    </source>
</reference>
<sequence length="219" mass="25497">MFYSHLLFFTFTFACSSSLNRKTKREMDLEDIILDTCHQKAVCAHIQMHLKETYVDELCKCGGGQECPLHWDPNDGHSITLAYNQWKFCSPTSQDLPVCTREQTAREFSYDMKPVSKKVQMFMFFNCLCPENHFYEFFNEREEETGGGQLAIIEERCEKMKQCEKTQICQKIETLQGKFLFKHVKCFCPGDQNCNDDLKKADAIDVGDDGSVQHYMKCH</sequence>
<evidence type="ECO:0000255" key="1"/>
<evidence type="ECO:0000269" key="2">
    <source>
    </source>
</evidence>
<evidence type="ECO:0000303" key="3">
    <source>
    </source>
</evidence>
<evidence type="ECO:0000305" key="4"/>
<evidence type="ECO:0000305" key="5">
    <source>
    </source>
</evidence>
<accession>P0DQA3</accession>
<feature type="signal peptide" evidence="1">
    <location>
        <begin position="1"/>
        <end position="16"/>
    </location>
</feature>
<feature type="propeptide" id="PRO_0000446762" evidence="5">
    <location>
        <begin position="17"/>
        <end position="25"/>
    </location>
</feature>
<feature type="chain" id="PRO_0000446763" description="Kappa-scoloptoxin(11)-Ss1a" evidence="5">
    <location>
        <begin position="26"/>
        <end position="219"/>
    </location>
</feature>
<protein>
    <recommendedName>
        <fullName evidence="4">Kappa-scoloptoxin(11)-Ss1a</fullName>
        <shortName evidence="4">Kappa-SLPTX(11)-Ss1a</shortName>
    </recommendedName>
    <alternativeName>
        <fullName evidence="3">Toxin SSD92</fullName>
    </alternativeName>
</protein>
<proteinExistence type="evidence at protein level"/>
<keyword id="KW-0165">Cleavage on pair of basic residues</keyword>
<keyword id="KW-0903">Direct protein sequencing</keyword>
<keyword id="KW-1015">Disulfide bond</keyword>
<keyword id="KW-0872">Ion channel impairing toxin</keyword>
<keyword id="KW-0632">Potassium channel impairing toxin</keyword>
<keyword id="KW-0964">Secreted</keyword>
<keyword id="KW-0732">Signal</keyword>
<keyword id="KW-0800">Toxin</keyword>
<keyword id="KW-1220">Voltage-gated potassium channel impairing toxin</keyword>
<organism>
    <name type="scientific">Scolopendra dehaani</name>
    <name type="common">Thai centipede</name>
    <name type="synonym">Scolopendra subspinipes dehaani</name>
    <dbReference type="NCBI Taxonomy" id="2609776"/>
    <lineage>
        <taxon>Eukaryota</taxon>
        <taxon>Metazoa</taxon>
        <taxon>Ecdysozoa</taxon>
        <taxon>Arthropoda</taxon>
        <taxon>Myriapoda</taxon>
        <taxon>Chilopoda</taxon>
        <taxon>Pleurostigmophora</taxon>
        <taxon>Scolopendromorpha</taxon>
        <taxon>Scolopendridae</taxon>
        <taxon>Scolopendra</taxon>
    </lineage>
</organism>